<protein>
    <recommendedName>
        <fullName evidence="1">Phosphopantetheine adenylyltransferase</fullName>
        <ecNumber evidence="1">2.7.7.3</ecNumber>
    </recommendedName>
    <alternativeName>
        <fullName evidence="1">Dephospho-CoA pyrophosphorylase</fullName>
    </alternativeName>
    <alternativeName>
        <fullName evidence="1">Pantetheine-phosphate adenylyltransferase</fullName>
        <shortName evidence="1">PPAT</shortName>
    </alternativeName>
</protein>
<organism>
    <name type="scientific">Yersinia pestis</name>
    <dbReference type="NCBI Taxonomy" id="632"/>
    <lineage>
        <taxon>Bacteria</taxon>
        <taxon>Pseudomonadati</taxon>
        <taxon>Pseudomonadota</taxon>
        <taxon>Gammaproteobacteria</taxon>
        <taxon>Enterobacterales</taxon>
        <taxon>Yersiniaceae</taxon>
        <taxon>Yersinia</taxon>
    </lineage>
</organism>
<name>COAD_YERPE</name>
<dbReference type="EC" id="2.7.7.3" evidence="1"/>
<dbReference type="EMBL" id="AL590842">
    <property type="protein sequence ID" value="CAL18743.1"/>
    <property type="molecule type" value="Genomic_DNA"/>
</dbReference>
<dbReference type="EMBL" id="AE009952">
    <property type="protein sequence ID" value="AAM83682.1"/>
    <property type="molecule type" value="Genomic_DNA"/>
</dbReference>
<dbReference type="EMBL" id="AE017042">
    <property type="protein sequence ID" value="AAS60335.1"/>
    <property type="molecule type" value="Genomic_DNA"/>
</dbReference>
<dbReference type="PIR" id="AF0007">
    <property type="entry name" value="AF0007"/>
</dbReference>
<dbReference type="RefSeq" id="WP_002208988.1">
    <property type="nucleotide sequence ID" value="NZ_WUCM01000015.1"/>
</dbReference>
<dbReference type="RefSeq" id="YP_002345149.1">
    <property type="nucleotide sequence ID" value="NC_003143.1"/>
</dbReference>
<dbReference type="PDB" id="3L92">
    <property type="method" value="X-ray"/>
    <property type="resolution" value="1.89 A"/>
    <property type="chains" value="A=1-159"/>
</dbReference>
<dbReference type="PDB" id="3L93">
    <property type="method" value="X-ray"/>
    <property type="resolution" value="2.16 A"/>
    <property type="chains" value="A=1-159"/>
</dbReference>
<dbReference type="PDBsum" id="3L92"/>
<dbReference type="PDBsum" id="3L93"/>
<dbReference type="SMR" id="Q8ZJN9"/>
<dbReference type="STRING" id="214092.YPO0053"/>
<dbReference type="PaxDb" id="214092-YPO0053"/>
<dbReference type="DNASU" id="1145035"/>
<dbReference type="EnsemblBacteria" id="AAS60335">
    <property type="protein sequence ID" value="AAS60335"/>
    <property type="gene ID" value="YP_0054"/>
</dbReference>
<dbReference type="GeneID" id="57974537"/>
<dbReference type="KEGG" id="ype:YPO0053"/>
<dbReference type="KEGG" id="ypk:y0088"/>
<dbReference type="KEGG" id="ypm:YP_0054"/>
<dbReference type="PATRIC" id="fig|1028802.3.peg.668"/>
<dbReference type="eggNOG" id="COG0669">
    <property type="taxonomic scope" value="Bacteria"/>
</dbReference>
<dbReference type="HOGENOM" id="CLU_100149_0_1_6"/>
<dbReference type="OMA" id="MALMNRK"/>
<dbReference type="OrthoDB" id="9806661at2"/>
<dbReference type="UniPathway" id="UPA00241">
    <property type="reaction ID" value="UER00355"/>
</dbReference>
<dbReference type="EvolutionaryTrace" id="Q8ZJN9"/>
<dbReference type="Proteomes" id="UP000000815">
    <property type="component" value="Chromosome"/>
</dbReference>
<dbReference type="Proteomes" id="UP000001019">
    <property type="component" value="Chromosome"/>
</dbReference>
<dbReference type="Proteomes" id="UP000002490">
    <property type="component" value="Chromosome"/>
</dbReference>
<dbReference type="GO" id="GO:0005737">
    <property type="term" value="C:cytoplasm"/>
    <property type="evidence" value="ECO:0007669"/>
    <property type="project" value="UniProtKB-SubCell"/>
</dbReference>
<dbReference type="GO" id="GO:0005524">
    <property type="term" value="F:ATP binding"/>
    <property type="evidence" value="ECO:0007669"/>
    <property type="project" value="UniProtKB-KW"/>
</dbReference>
<dbReference type="GO" id="GO:0004595">
    <property type="term" value="F:pantetheine-phosphate adenylyltransferase activity"/>
    <property type="evidence" value="ECO:0000318"/>
    <property type="project" value="GO_Central"/>
</dbReference>
<dbReference type="GO" id="GO:0015937">
    <property type="term" value="P:coenzyme A biosynthetic process"/>
    <property type="evidence" value="ECO:0000318"/>
    <property type="project" value="GO_Central"/>
</dbReference>
<dbReference type="CDD" id="cd02163">
    <property type="entry name" value="PPAT"/>
    <property type="match status" value="1"/>
</dbReference>
<dbReference type="FunFam" id="3.40.50.620:FF:000012">
    <property type="entry name" value="Phosphopantetheine adenylyltransferase"/>
    <property type="match status" value="1"/>
</dbReference>
<dbReference type="Gene3D" id="3.40.50.620">
    <property type="entry name" value="HUPs"/>
    <property type="match status" value="1"/>
</dbReference>
<dbReference type="HAMAP" id="MF_00151">
    <property type="entry name" value="PPAT_bact"/>
    <property type="match status" value="1"/>
</dbReference>
<dbReference type="InterPro" id="IPR004821">
    <property type="entry name" value="Cyt_trans-like"/>
</dbReference>
<dbReference type="InterPro" id="IPR001980">
    <property type="entry name" value="PPAT"/>
</dbReference>
<dbReference type="InterPro" id="IPR014729">
    <property type="entry name" value="Rossmann-like_a/b/a_fold"/>
</dbReference>
<dbReference type="NCBIfam" id="TIGR01510">
    <property type="entry name" value="coaD_prev_kdtB"/>
    <property type="match status" value="1"/>
</dbReference>
<dbReference type="NCBIfam" id="TIGR00125">
    <property type="entry name" value="cyt_tran_rel"/>
    <property type="match status" value="1"/>
</dbReference>
<dbReference type="PANTHER" id="PTHR21342">
    <property type="entry name" value="PHOSPHOPANTETHEINE ADENYLYLTRANSFERASE"/>
    <property type="match status" value="1"/>
</dbReference>
<dbReference type="PANTHER" id="PTHR21342:SF1">
    <property type="entry name" value="PHOSPHOPANTETHEINE ADENYLYLTRANSFERASE"/>
    <property type="match status" value="1"/>
</dbReference>
<dbReference type="Pfam" id="PF01467">
    <property type="entry name" value="CTP_transf_like"/>
    <property type="match status" value="1"/>
</dbReference>
<dbReference type="PRINTS" id="PR01020">
    <property type="entry name" value="LPSBIOSNTHSS"/>
</dbReference>
<dbReference type="SUPFAM" id="SSF52374">
    <property type="entry name" value="Nucleotidylyl transferase"/>
    <property type="match status" value="1"/>
</dbReference>
<evidence type="ECO:0000255" key="1">
    <source>
        <dbReference type="HAMAP-Rule" id="MF_00151"/>
    </source>
</evidence>
<evidence type="ECO:0000305" key="2">
    <source ref="4"/>
</evidence>
<evidence type="ECO:0007744" key="3">
    <source>
        <dbReference type="PDB" id="3L92"/>
    </source>
</evidence>
<evidence type="ECO:0007829" key="4">
    <source>
        <dbReference type="PDB" id="3L92"/>
    </source>
</evidence>
<accession>Q8ZJN9</accession>
<accession>Q0WKN9</accession>
<gene>
    <name evidence="1" type="primary">coaD</name>
    <name type="synonym">kdtB</name>
    <name type="ordered locus">YPO0053</name>
    <name type="ordered locus">y0088</name>
    <name type="ordered locus">YP_0054</name>
</gene>
<feature type="chain" id="PRO_0000156315" description="Phosphopantetheine adenylyltransferase">
    <location>
        <begin position="1"/>
        <end position="159"/>
    </location>
</feature>
<feature type="binding site" evidence="1 2 3">
    <location>
        <begin position="10"/>
        <end position="11"/>
    </location>
    <ligand>
        <name>ATP</name>
        <dbReference type="ChEBI" id="CHEBI:30616"/>
    </ligand>
</feature>
<feature type="binding site" evidence="1">
    <location>
        <position position="10"/>
    </location>
    <ligand>
        <name>substrate</name>
    </ligand>
</feature>
<feature type="binding site" evidence="1">
    <location>
        <position position="18"/>
    </location>
    <ligand>
        <name>ATP</name>
        <dbReference type="ChEBI" id="CHEBI:30616"/>
    </ligand>
</feature>
<feature type="binding site" evidence="1 2 3">
    <location>
        <position position="42"/>
    </location>
    <ligand>
        <name>substrate</name>
    </ligand>
</feature>
<feature type="binding site" evidence="1 2 3">
    <location>
        <position position="74"/>
    </location>
    <ligand>
        <name>substrate</name>
    </ligand>
</feature>
<feature type="binding site" evidence="1">
    <location>
        <position position="88"/>
    </location>
    <ligand>
        <name>substrate</name>
    </ligand>
</feature>
<feature type="binding site" evidence="1 2 3">
    <location>
        <begin position="89"/>
        <end position="91"/>
    </location>
    <ligand>
        <name>ATP</name>
        <dbReference type="ChEBI" id="CHEBI:30616"/>
    </ligand>
</feature>
<feature type="binding site" evidence="1 2 3">
    <location>
        <position position="99"/>
    </location>
    <ligand>
        <name>ATP</name>
        <dbReference type="ChEBI" id="CHEBI:30616"/>
    </ligand>
</feature>
<feature type="binding site" evidence="1 2">
    <location>
        <begin position="124"/>
        <end position="130"/>
    </location>
    <ligand>
        <name>ATP</name>
        <dbReference type="ChEBI" id="CHEBI:30616"/>
    </ligand>
</feature>
<feature type="site" description="Transition state stabilizer" evidence="1">
    <location>
        <position position="18"/>
    </location>
</feature>
<feature type="strand" evidence="4">
    <location>
        <begin position="4"/>
        <end position="9"/>
    </location>
</feature>
<feature type="helix" evidence="4">
    <location>
        <begin position="16"/>
        <end position="28"/>
    </location>
</feature>
<feature type="strand" evidence="4">
    <location>
        <begin position="29"/>
        <end position="37"/>
    </location>
</feature>
<feature type="helix" evidence="4">
    <location>
        <begin position="40"/>
        <end position="42"/>
    </location>
</feature>
<feature type="helix" evidence="4">
    <location>
        <begin position="48"/>
        <end position="59"/>
    </location>
</feature>
<feature type="strand" evidence="4">
    <location>
        <begin position="65"/>
        <end position="70"/>
    </location>
</feature>
<feature type="helix" evidence="4">
    <location>
        <begin position="74"/>
        <end position="80"/>
    </location>
</feature>
<feature type="strand" evidence="4">
    <location>
        <begin position="85"/>
        <end position="89"/>
    </location>
</feature>
<feature type="helix" evidence="4">
    <location>
        <begin position="93"/>
        <end position="95"/>
    </location>
</feature>
<feature type="helix" evidence="4">
    <location>
        <begin position="96"/>
        <end position="109"/>
    </location>
</feature>
<feature type="strand" evidence="4">
    <location>
        <begin position="114"/>
        <end position="118"/>
    </location>
</feature>
<feature type="turn" evidence="4">
    <location>
        <begin position="122"/>
        <end position="126"/>
    </location>
</feature>
<feature type="helix" evidence="4">
    <location>
        <begin position="129"/>
        <end position="137"/>
    </location>
</feature>
<feature type="turn" evidence="4">
    <location>
        <begin position="143"/>
        <end position="145"/>
    </location>
</feature>
<feature type="helix" evidence="4">
    <location>
        <begin position="148"/>
        <end position="158"/>
    </location>
</feature>
<keyword id="KW-0002">3D-structure</keyword>
<keyword id="KW-0067">ATP-binding</keyword>
<keyword id="KW-0173">Coenzyme A biosynthesis</keyword>
<keyword id="KW-0963">Cytoplasm</keyword>
<keyword id="KW-0460">Magnesium</keyword>
<keyword id="KW-0547">Nucleotide-binding</keyword>
<keyword id="KW-0548">Nucleotidyltransferase</keyword>
<keyword id="KW-1185">Reference proteome</keyword>
<keyword id="KW-0808">Transferase</keyword>
<reference key="1">
    <citation type="journal article" date="2001" name="Nature">
        <title>Genome sequence of Yersinia pestis, the causative agent of plague.</title>
        <authorList>
            <person name="Parkhill J."/>
            <person name="Wren B.W."/>
            <person name="Thomson N.R."/>
            <person name="Titball R.W."/>
            <person name="Holden M.T.G."/>
            <person name="Prentice M.B."/>
            <person name="Sebaihia M."/>
            <person name="James K.D."/>
            <person name="Churcher C.M."/>
            <person name="Mungall K.L."/>
            <person name="Baker S."/>
            <person name="Basham D."/>
            <person name="Bentley S.D."/>
            <person name="Brooks K."/>
            <person name="Cerdeno-Tarraga A.-M."/>
            <person name="Chillingworth T."/>
            <person name="Cronin A."/>
            <person name="Davies R.M."/>
            <person name="Davis P."/>
            <person name="Dougan G."/>
            <person name="Feltwell T."/>
            <person name="Hamlin N."/>
            <person name="Holroyd S."/>
            <person name="Jagels K."/>
            <person name="Karlyshev A.V."/>
            <person name="Leather S."/>
            <person name="Moule S."/>
            <person name="Oyston P.C.F."/>
            <person name="Quail M.A."/>
            <person name="Rutherford K.M."/>
            <person name="Simmonds M."/>
            <person name="Skelton J."/>
            <person name="Stevens K."/>
            <person name="Whitehead S."/>
            <person name="Barrell B.G."/>
        </authorList>
    </citation>
    <scope>NUCLEOTIDE SEQUENCE [LARGE SCALE GENOMIC DNA]</scope>
    <source>
        <strain>CO-92 / Biovar Orientalis</strain>
    </source>
</reference>
<reference key="2">
    <citation type="journal article" date="2002" name="J. Bacteriol.">
        <title>Genome sequence of Yersinia pestis KIM.</title>
        <authorList>
            <person name="Deng W."/>
            <person name="Burland V."/>
            <person name="Plunkett G. III"/>
            <person name="Boutin A."/>
            <person name="Mayhew G.F."/>
            <person name="Liss P."/>
            <person name="Perna N.T."/>
            <person name="Rose D.J."/>
            <person name="Mau B."/>
            <person name="Zhou S."/>
            <person name="Schwartz D.C."/>
            <person name="Fetherston J.D."/>
            <person name="Lindler L.E."/>
            <person name="Brubaker R.R."/>
            <person name="Plano G.V."/>
            <person name="Straley S.C."/>
            <person name="McDonough K.A."/>
            <person name="Nilles M.L."/>
            <person name="Matson J.S."/>
            <person name="Blattner F.R."/>
            <person name="Perry R.D."/>
        </authorList>
    </citation>
    <scope>NUCLEOTIDE SEQUENCE [LARGE SCALE GENOMIC DNA]</scope>
    <source>
        <strain>KIM10+ / Biovar Mediaevalis</strain>
    </source>
</reference>
<reference key="3">
    <citation type="journal article" date="2004" name="DNA Res.">
        <title>Complete genome sequence of Yersinia pestis strain 91001, an isolate avirulent to humans.</title>
        <authorList>
            <person name="Song Y."/>
            <person name="Tong Z."/>
            <person name="Wang J."/>
            <person name="Wang L."/>
            <person name="Guo Z."/>
            <person name="Han Y."/>
            <person name="Zhang J."/>
            <person name="Pei D."/>
            <person name="Zhou D."/>
            <person name="Qin H."/>
            <person name="Pang X."/>
            <person name="Han Y."/>
            <person name="Zhai J."/>
            <person name="Li M."/>
            <person name="Cui B."/>
            <person name="Qi Z."/>
            <person name="Jin L."/>
            <person name="Dai R."/>
            <person name="Chen F."/>
            <person name="Li S."/>
            <person name="Ye C."/>
            <person name="Du Z."/>
            <person name="Lin W."/>
            <person name="Wang J."/>
            <person name="Yu J."/>
            <person name="Yang H."/>
            <person name="Wang J."/>
            <person name="Huang P."/>
            <person name="Yang R."/>
        </authorList>
    </citation>
    <scope>NUCLEOTIDE SEQUENCE [LARGE SCALE GENOMIC DNA]</scope>
    <source>
        <strain>91001 / Biovar Mediaevalis</strain>
    </source>
</reference>
<reference key="4">
    <citation type="submission" date="2010-01" db="PDB data bank">
        <title>X-ray crystal structure of phosphopantetheine adenylyltransferase from Yersinia pestis.</title>
        <authorList>
            <person name="Osipiuk J."/>
            <person name="Maltseva N."/>
            <person name="Makowska-grzyska M."/>
            <person name="Kwon K."/>
            <person name="Anderson W.F."/>
            <person name="Joachimiak A."/>
        </authorList>
    </citation>
    <scope>X-RAY CRYSTALLOGRAPHY (1.89 ANGSTROMS) IN COMPLEX WITH COENZYME A</scope>
</reference>
<comment type="function">
    <text evidence="1">Reversibly transfers an adenylyl group from ATP to 4'-phosphopantetheine, yielding dephospho-CoA (dPCoA) and pyrophosphate.</text>
</comment>
<comment type="catalytic activity">
    <reaction evidence="1">
        <text>(R)-4'-phosphopantetheine + ATP + H(+) = 3'-dephospho-CoA + diphosphate</text>
        <dbReference type="Rhea" id="RHEA:19801"/>
        <dbReference type="ChEBI" id="CHEBI:15378"/>
        <dbReference type="ChEBI" id="CHEBI:30616"/>
        <dbReference type="ChEBI" id="CHEBI:33019"/>
        <dbReference type="ChEBI" id="CHEBI:57328"/>
        <dbReference type="ChEBI" id="CHEBI:61723"/>
        <dbReference type="EC" id="2.7.7.3"/>
    </reaction>
</comment>
<comment type="cofactor">
    <cofactor evidence="1">
        <name>Mg(2+)</name>
        <dbReference type="ChEBI" id="CHEBI:18420"/>
    </cofactor>
</comment>
<comment type="pathway">
    <text evidence="1">Cofactor biosynthesis; coenzyme A biosynthesis; CoA from (R)-pantothenate: step 4/5.</text>
</comment>
<comment type="subunit">
    <text evidence="1">Homohexamer.</text>
</comment>
<comment type="subcellular location">
    <subcellularLocation>
        <location evidence="1">Cytoplasm</location>
    </subcellularLocation>
</comment>
<comment type="similarity">
    <text evidence="1">Belongs to the bacterial CoaD family.</text>
</comment>
<sequence>MITKAIYPGTFDPITNGHLDLVTRASAMFSHVILAIADSSSKKPMFTLDERVALAKKVTAPLKNVEVLGFSELMAEFAKKHNANILVRGLRSVSDFEYEWQLANMNRHLMPKLESVFLIPSEKWSFISSSLVKEVARHGGDITPFLPKPVTKALLAKLA</sequence>
<proteinExistence type="evidence at protein level"/>